<name>SL9A1_RAT</name>
<protein>
    <recommendedName>
        <fullName>Sodium/hydrogen exchanger 1</fullName>
    </recommendedName>
    <alternativeName>
        <fullName evidence="15">Na(+)/H(+) exchanger 1</fullName>
        <shortName evidence="15">NHE-1</shortName>
    </alternativeName>
    <alternativeName>
        <fullName>Solute carrier family 9 member 1</fullName>
    </alternativeName>
</protein>
<evidence type="ECO:0000250" key="1"/>
<evidence type="ECO:0000250" key="2">
    <source>
        <dbReference type="UniProtKB" id="P19634"/>
    </source>
</evidence>
<evidence type="ECO:0000250" key="3">
    <source>
        <dbReference type="UniProtKB" id="P48762"/>
    </source>
</evidence>
<evidence type="ECO:0000250" key="4">
    <source>
        <dbReference type="UniProtKB" id="Q61165"/>
    </source>
</evidence>
<evidence type="ECO:0000256" key="5">
    <source>
        <dbReference type="SAM" id="MobiDB-lite"/>
    </source>
</evidence>
<evidence type="ECO:0000269" key="6">
    <source>
    </source>
</evidence>
<evidence type="ECO:0000269" key="7">
    <source>
    </source>
</evidence>
<evidence type="ECO:0000269" key="8">
    <source>
    </source>
</evidence>
<evidence type="ECO:0000269" key="9">
    <source>
    </source>
</evidence>
<evidence type="ECO:0000269" key="10">
    <source>
    </source>
</evidence>
<evidence type="ECO:0000269" key="11">
    <source>
    </source>
</evidence>
<evidence type="ECO:0000269" key="12">
    <source>
    </source>
</evidence>
<evidence type="ECO:0000269" key="13">
    <source>
    </source>
</evidence>
<evidence type="ECO:0000269" key="14">
    <source>
    </source>
</evidence>
<evidence type="ECO:0000303" key="15">
    <source>
    </source>
</evidence>
<evidence type="ECO:0000305" key="16"/>
<evidence type="ECO:0000305" key="17">
    <source>
    </source>
</evidence>
<evidence type="ECO:0000305" key="18">
    <source>
    </source>
</evidence>
<evidence type="ECO:0007744" key="19">
    <source>
    </source>
</evidence>
<proteinExistence type="evidence at protein level"/>
<accession>P26431</accession>
<organism>
    <name type="scientific">Rattus norvegicus</name>
    <name type="common">Rat</name>
    <dbReference type="NCBI Taxonomy" id="10116"/>
    <lineage>
        <taxon>Eukaryota</taxon>
        <taxon>Metazoa</taxon>
        <taxon>Chordata</taxon>
        <taxon>Craniata</taxon>
        <taxon>Vertebrata</taxon>
        <taxon>Euteleostomi</taxon>
        <taxon>Mammalia</taxon>
        <taxon>Eutheria</taxon>
        <taxon>Euarchontoglires</taxon>
        <taxon>Glires</taxon>
        <taxon>Rodentia</taxon>
        <taxon>Myomorpha</taxon>
        <taxon>Muroidea</taxon>
        <taxon>Muridae</taxon>
        <taxon>Murinae</taxon>
        <taxon>Rattus</taxon>
    </lineage>
</organism>
<sequence>MMLRWSGIWGLYPPRIFPSLLVVVALVGLLPVLRSHGLQLNPTASTIRGSEPPRERSIGDVTTAPSEPLHHPDDRNLTNLYIEHGAKPVRKAFPVLDIDYLHVRTPFEISLWILLACLMKIGFHVIPTISSIVPESCLLIVVGLLVGGLIKGVGETPPFLQSDVFFLFLLPPIILDAGYFLPLRQFTENLGTILIFAVVGTLWNAFFLGGLLYAVCLVGGEQINNIGLLDTLLFGSIISAVDPVAVLAVFEEIHINELLHILVFGESLLNDAVTVVLYHLFEEFASYEYVGISDIFLGFLSFFVVSLGGVFVGVVYGVIAAFTSRFTSHIRVIEPLFVFLYSYMAYLSAELFHLSGIMALIASGVVMRPYVEANISHKSHTTIKYFLKMWSSVSETLIFIFLGVSTVAGSHQWNWTFVISTLLFCLIARVLGVLVLTWFINKFRIVKLTPKDQFIIAYGGLRGAIAFSLGYLLDKKHFPMCDLFLTAIITVIFFTVFVQGMTIRPLVDLLAVKKKQETKRSINEEIHTQFLDHLLTGIEDICGHYGHHHWKDKLNRFNKKYVKKCLIAGERSKEPQLIAFYHKMEMKQAIELVESGGMGKIPSAVSTVSMQNIHPKSAASERILPALSKDKEEEIRKILRSNLQKTRQRLRSYNRHTLVADPYEEAWNQMLLRRQKARQLEQKITNYLTVPAHKLDSPTMSRARIGSDPLAYEPKADLPVITIDPASPQSPESVDLVNEELKGKVLGLKRGPRTTPEEEEEDEDGVIMIRSKEPSSPGTDDVFTPGPSDSPGSQRIQRCLSDPGPHPEPGEGEPFIPKGQ</sequence>
<gene>
    <name type="primary">Slc9a1</name>
    <name type="synonym">Nhe1</name>
</gene>
<feature type="chain" id="PRO_0000052351" description="Sodium/hydrogen exchanger 1">
    <location>
        <begin position="1"/>
        <end position="820"/>
    </location>
</feature>
<feature type="topological domain" description="Extracellular" evidence="16">
    <location>
        <begin position="1"/>
        <end position="102"/>
    </location>
</feature>
<feature type="transmembrane region" description="Helical; Name=1" evidence="2">
    <location>
        <begin position="103"/>
        <end position="125"/>
    </location>
</feature>
<feature type="topological domain" description="Cytoplasmic" evidence="16">
    <location>
        <begin position="126"/>
        <end position="134"/>
    </location>
</feature>
<feature type="transmembrane region" description="Helical; Name=2" evidence="2">
    <location>
        <begin position="135"/>
        <end position="152"/>
    </location>
</feature>
<feature type="topological domain" description="Extracellular" evidence="16">
    <location>
        <begin position="153"/>
        <end position="162"/>
    </location>
</feature>
<feature type="transmembrane region" description="Helical; Name=3" evidence="2">
    <location>
        <begin position="163"/>
        <end position="180"/>
    </location>
</feature>
<feature type="topological domain" description="Cytoplasmic" evidence="16">
    <location>
        <begin position="181"/>
        <end position="190"/>
    </location>
</feature>
<feature type="transmembrane region" description="Helical; Name=4" evidence="2">
    <location>
        <begin position="191"/>
        <end position="219"/>
    </location>
</feature>
<feature type="topological domain" description="Extracellular" evidence="16">
    <location>
        <begin position="220"/>
        <end position="226"/>
    </location>
</feature>
<feature type="transmembrane region" description="Helical; Name=5" evidence="2">
    <location>
        <begin position="227"/>
        <end position="253"/>
    </location>
</feature>
<feature type="topological domain" description="Cytoplasmic" evidence="16">
    <location>
        <begin position="254"/>
        <end position="256"/>
    </location>
</feature>
<feature type="transmembrane region" description="Helical; Name=6" evidence="2">
    <location>
        <begin position="257"/>
        <end position="287"/>
    </location>
</feature>
<feature type="topological domain" description="Extracellular" evidence="16">
    <location>
        <begin position="288"/>
        <end position="291"/>
    </location>
</feature>
<feature type="transmembrane region" description="Helical; Name=7" evidence="2">
    <location>
        <begin position="292"/>
        <end position="326"/>
    </location>
</feature>
<feature type="topological domain" description="Cytoplasmic" evidence="16">
    <location>
        <begin position="327"/>
        <end position="332"/>
    </location>
</feature>
<feature type="transmembrane region" description="Helical; Name=8" evidence="2">
    <location>
        <begin position="333"/>
        <end position="345"/>
    </location>
</feature>
<feature type="topological domain" description="Extracellular" evidence="16">
    <location>
        <begin position="346"/>
        <end position="354"/>
    </location>
</feature>
<feature type="transmembrane region" description="Helical; Name=9" evidence="2">
    <location>
        <begin position="355"/>
        <end position="375"/>
    </location>
</feature>
<feature type="topological domain" description="Cytoplasmic" evidence="16">
    <location>
        <begin position="376"/>
        <end position="377"/>
    </location>
</feature>
<feature type="transmembrane region" description="Helical; Name=10" evidence="2">
    <location>
        <begin position="378"/>
        <end position="408"/>
    </location>
</feature>
<feature type="topological domain" description="Extracellular" evidence="16">
    <location>
        <begin position="409"/>
        <end position="414"/>
    </location>
</feature>
<feature type="transmembrane region" description="Helical; Name=11" evidence="2">
    <location>
        <begin position="415"/>
        <end position="442"/>
    </location>
</feature>
<feature type="topological domain" description="Cytoplasmic" evidence="16">
    <location>
        <begin position="443"/>
        <end position="448"/>
    </location>
</feature>
<feature type="transmembrane region" description="Helical; Name=12" evidence="2">
    <location>
        <begin position="449"/>
        <end position="473"/>
    </location>
</feature>
<feature type="topological domain" description="Extracellular" evidence="16">
    <location>
        <begin position="474"/>
        <end position="479"/>
    </location>
</feature>
<feature type="transmembrane region" description="Helical; Name=13" evidence="2">
    <location>
        <begin position="480"/>
        <end position="509"/>
    </location>
</feature>
<feature type="topological domain" description="Cytoplasmic" evidence="16">
    <location>
        <begin position="510"/>
        <end position="820"/>
    </location>
</feature>
<feature type="region of interest" description="Disordered" evidence="5">
    <location>
        <begin position="44"/>
        <end position="71"/>
    </location>
</feature>
<feature type="region of interest" description="Interaction with TESC" evidence="10">
    <location>
        <begin position="505"/>
        <end position="571"/>
    </location>
</feature>
<feature type="region of interest" description="PI(4,5)P2-binding region" evidence="6">
    <location>
        <begin position="513"/>
        <end position="520"/>
    </location>
</feature>
<feature type="region of interest" description="Interaction with CHP2" evidence="2">
    <location>
        <begin position="519"/>
        <end position="549"/>
    </location>
</feature>
<feature type="region of interest" description="Confers pH-dependent PI(4,5)P2 binding" evidence="2">
    <location>
        <begin position="544"/>
        <end position="549"/>
    </location>
</feature>
<feature type="region of interest" description="PI(4,5)P2-binding region" evidence="6">
    <location>
        <begin position="556"/>
        <end position="564"/>
    </location>
</feature>
<feature type="region of interest" description="Interaction with CALM1" evidence="2">
    <location>
        <begin position="637"/>
        <end position="820"/>
    </location>
</feature>
<feature type="region of interest" description="Interaction with TESC" evidence="2">
    <location>
        <begin position="637"/>
        <end position="820"/>
    </location>
</feature>
<feature type="region of interest" description="Interaction with PPP3CA" evidence="2">
    <location>
        <begin position="688"/>
        <end position="691"/>
    </location>
</feature>
<feature type="region of interest" description="Interaction with PPP3CA" evidence="2">
    <location>
        <begin position="719"/>
        <end position="724"/>
    </location>
</feature>
<feature type="region of interest" description="Disordered" evidence="5">
    <location>
        <begin position="747"/>
        <end position="820"/>
    </location>
</feature>
<feature type="site" description="Channel pore-lining" evidence="1">
    <location>
        <position position="165"/>
    </location>
</feature>
<feature type="modified residue" description="Phosphoserine" evidence="19">
    <location>
        <position position="603"/>
    </location>
</feature>
<feature type="modified residue" description="Phosphoserine" evidence="2">
    <location>
        <position position="606"/>
    </location>
</feature>
<feature type="modified residue" description="Phosphothreonine" evidence="4">
    <location>
        <position position="607"/>
    </location>
</feature>
<feature type="modified residue" description="Phosphoserine" evidence="19">
    <location>
        <position position="609"/>
    </location>
</feature>
<feature type="modified residue" description="Phosphoserine" evidence="2">
    <location>
        <position position="652"/>
    </location>
</feature>
<feature type="modified residue" description="Phosphoserine" evidence="19">
    <location>
        <position position="697"/>
    </location>
</feature>
<feature type="modified residue" description="Phosphoserine" evidence="19">
    <location>
        <position position="701"/>
    </location>
</feature>
<feature type="modified residue" description="Phosphoserine" evidence="19">
    <location>
        <position position="707"/>
    </location>
</feature>
<feature type="modified residue" description="Phosphoserine" evidence="19">
    <location>
        <position position="727"/>
    </location>
</feature>
<feature type="modified residue" description="Phosphoserine" evidence="19">
    <location>
        <position position="730"/>
    </location>
</feature>
<feature type="modified residue" description="Phosphoserine" evidence="19">
    <location>
        <position position="733"/>
    </location>
</feature>
<feature type="modified residue" description="Phosphothreonine" evidence="4">
    <location>
        <position position="755"/>
    </location>
</feature>
<feature type="modified residue" description="Phosphothreonine" evidence="2">
    <location>
        <position position="784"/>
    </location>
</feature>
<feature type="modified residue" description="Phosphoserine" evidence="19">
    <location>
        <position position="790"/>
    </location>
</feature>
<feature type="modified residue" description="Phosphoserine" evidence="19">
    <location>
        <position position="801"/>
    </location>
</feature>
<feature type="mutagenesis site" description="Abolishes sodium:proton antiporter activity." evidence="7">
    <original>E</original>
    <variation>I</variation>
    <location>
        <position position="266"/>
    </location>
</feature>
<feature type="mutagenesis site" description="Abolishes interaction with TESC and markedly reduces transporter activity. Does not alter its cell membrane localization." evidence="11">
    <original>INEEIHTQFLDHLLTGI</original>
    <variation>QNEEQHTQQLDHQQTGQ</variation>
    <location>
        <begin position="522"/>
        <end position="538"/>
    </location>
</feature>
<feature type="mutagenesis site" description="Abolishes interaction with TESC and markedly reduces transporter activity. Does not alter its cell membrane localization." evidence="10">
    <original>FLDHLL</original>
    <variation>AADHAA</variation>
    <location>
        <begin position="530"/>
        <end position="535"/>
    </location>
</feature>
<feature type="mutagenesis site" description="Abolishes interaction with TESC and markedly reduces transporter activity. Does not alter its cell membrane localization." evidence="10">
    <original>FLDHLL</original>
    <variation>QQDHQQ</variation>
    <location>
        <begin position="530"/>
        <end position="535"/>
    </location>
</feature>
<feature type="mutagenesis site" description="Abolishes interaction with TESC and markedly reduces transporter activity. Does not alter its cell membrane localization." evidence="10">
    <original>FLDHLL</original>
    <variation>RRDHRR</variation>
    <location>
        <begin position="530"/>
        <end position="535"/>
    </location>
</feature>
<comment type="function">
    <text evidence="2 6 7 12 13 18">Electroneutral Na(+) /H(+) antiporter that extrudes Na(+) in exchange for external protons driven by the inward sodium ion chemical gradient, protecting cells from acidification that occurs from metabolism (Probable) (PubMed:10893269, PubMed:11163215). Exchanges intracellular H(+) ions for extracellular Na(+) in 1:1 stoichiometry (PubMed:6334130). Plays a key role in maintening intracellular pH neutral and cell volume, and thus is important for cell growth, proliferation, migration and survival (PubMed:34774621). In addition, can transport lithium Li(+) and also functions as a Na(+)/Li(+) antiporter. SLC9A1 also functions in membrane anchoring and organization of scaffolding complexes that coordinate signaling inputs (By similarity).</text>
</comment>
<comment type="catalytic activity">
    <reaction evidence="6 7 18">
        <text>Na(+)(in) + H(+)(out) = Na(+)(out) + H(+)(in)</text>
        <dbReference type="Rhea" id="RHEA:29419"/>
        <dbReference type="ChEBI" id="CHEBI:15378"/>
        <dbReference type="ChEBI" id="CHEBI:29101"/>
    </reaction>
</comment>
<comment type="catalytic activity">
    <reaction evidence="2">
        <text>Li(+)(out) + H(+)(in) = Li(+)(in) + H(+)(out)</text>
        <dbReference type="Rhea" id="RHEA:72407"/>
        <dbReference type="ChEBI" id="CHEBI:15378"/>
        <dbReference type="ChEBI" id="CHEBI:49713"/>
    </reaction>
</comment>
<comment type="catalytic activity">
    <reaction evidence="2">
        <text>Li(+)(in) + Na(+)(out) = Li(+)(out) + Na(+)(in)</text>
        <dbReference type="Rhea" id="RHEA:72415"/>
        <dbReference type="ChEBI" id="CHEBI:29101"/>
        <dbReference type="ChEBI" id="CHEBI:49713"/>
    </reaction>
</comment>
<comment type="activity regulation">
    <text evidence="2 17">Activated at acidic pHs. Inhibited by cariporide and eniporide (By similarity). Inhibited by amiloride and 5-amino-substituted derivatives. Phosphatidylinositol 4,5-bisphosphate (PI(4,5)P2) bind and activates SLC9A1 transporter activity (Probable).</text>
</comment>
<comment type="biophysicochemical properties">
    <phDependence>
        <text evidence="18">Fully active at acidic pHs, the antiporter is virtually turned off at neutral pH.</text>
    </phDependence>
</comment>
<comment type="subunit">
    <text evidence="2 7 8 10 11">Homodimer; dimerization is crucial for its function (By similarity). Oligomer (PubMed:21543739). Interacts with CALM1 in a calcium-dependent manner (By similarity). Interacts with TESC (PubMed:18321853). Interacts (via residues 504-563) with CHP1 (PubMed:12576672). The interaction with CHP1 occurs at the plasma membrane in a calcium-dependent manner (By similarity). Interacts with CHP2 (PubMed:12576672). The interaction with CHP2 occurs in a calcium-dependent manner (By similarity). Interacts with EZR; regulates the cytoskeletal interactions of SLC9A1 and promotes stress fiber formation (PubMed:11163215).</text>
</comment>
<comment type="interaction">
    <interactant intactId="EBI-77471">
        <id>P26431</id>
    </interactant>
    <interactant intactId="EBI-6146708">
        <id>Q810D1</id>
        <label>Chp2</label>
    </interactant>
    <organismsDiffer>false</organismsDiffer>
    <experiments>2</experiments>
</comment>
<comment type="subcellular location">
    <subcellularLocation>
        <location evidence="11">Cell membrane</location>
        <topology evidence="2">Multi-pass membrane protein</topology>
    </subcellularLocation>
    <subcellularLocation>
        <location evidence="3">Basolateral cell membrane</location>
        <topology evidence="2">Multi-pass membrane protein</topology>
    </subcellularLocation>
    <text evidence="2">Localized basolaterally in every epithelial cell, except in the choroid plexus where SLC9A1 is expressed luminally.</text>
</comment>
<comment type="tissue specificity">
    <text evidence="9">Widely expressed.</text>
</comment>
<comment type="PTM">
    <text evidence="11 14">N-glycosylated and O-glycosylated in the N-terminal region.</text>
</comment>
<comment type="PTM">
    <text evidence="11">Ubiquitinated, leading to its degradation by the proteasome. Ubiquitination is reduced by CHP1.</text>
</comment>
<comment type="PTM">
    <text evidence="12">Palmitoylated; may play a major role in SLC9A1 regulation.</text>
</comment>
<comment type="PTM">
    <text evidence="2">Phosphorylation at Thr-784 increases SLC9A1 activity; specifically dephosphorylated by PPP3CA. Specifically dephosphorylated at Thr-784 by PPP3CA that negatively regulates SLC9A1 activity. Phosphorylation at Ser-652 by AKT1 reduces SLC9A1 binding to CALM1.</text>
</comment>
<comment type="miscellaneous">
    <text evidence="2">Predicted models used for more than 20 years predicted 10-12 transmembrane segments. More recently, the structure of SLC9A1 has been solved and reveals that SLC9A1 possesses 13 transmembrane regions.</text>
</comment>
<comment type="similarity">
    <text evidence="16">Belongs to the monovalent cation:proton antiporter 1 (CPA1) transporter (TC 2.A.36) family.</text>
</comment>
<comment type="caution">
    <text evidence="16">Although PubMed:18321853 show that TESC-binding results in the maturation and accumulation of SLC9A1 at the cell surface, previous studies with human SLC9A1 report that TESC-binding results in a decrease in activity.</text>
</comment>
<comment type="caution">
    <text evidence="10 16">The interacting region with TESC is conflicting: It has been reported that SLC9A1 interacts with TESC via the juxtamembrane region of the cytoplasmic C-terminal domain, including residues 505-571 (PubMed:18321853). However, studies with human SLC9A1 report the interaction with TESC via residues 503-545 or via residues 633-815.</text>
</comment>
<reference key="1">
    <citation type="journal article" date="1992" name="J. Biol. Chem.">
        <title>Molecular cloning of putative members of the Na/H exchanger gene family. cDNA cloning, deduced amino acid sequence, and mRNA tissue expression of the rat Na/H exchanger NHE-1 and two structurally related proteins.</title>
        <authorList>
            <person name="Orlowski J."/>
            <person name="Kandasamy R.A."/>
            <person name="Shull G.E."/>
        </authorList>
    </citation>
    <scope>NUCLEOTIDE SEQUENCE [MRNA]</scope>
    <scope>TISSUE SPECIFICITY</scope>
    <source>
        <strain>Sprague-Dawley</strain>
        <tissue>Heart</tissue>
    </source>
</reference>
<reference key="2">
    <citation type="journal article" date="1984" name="J. Gen. Physiol.">
        <title>22Na+ fluxes in thymic lymphocytes. II. Amiloride-sensitive Na+/H+ exchange pathway; reversibility of transport and asymmetry of the modifier site.</title>
        <authorList>
            <person name="Grinstein S."/>
            <person name="Goetz J.D."/>
            <person name="Rothstein A."/>
        </authorList>
    </citation>
    <scope>FUNCTION</scope>
    <scope>TRANSPORTER ACTIVITY</scope>
    <scope>BIOPHYSICOCHEMICAL PROPERTIES</scope>
</reference>
<reference key="3">
    <citation type="journal article" date="1998" name="Am. J. Physiol.">
        <title>Topological analysis of NHE1, the ubiquitous Na+/H+ exchanger using chymotryptic cleavage.</title>
        <authorList>
            <person name="Shrode L.D."/>
            <person name="Gan B.S."/>
            <person name="D'Souza S.J."/>
            <person name="Orlowski J."/>
            <person name="Grinstein S."/>
        </authorList>
    </citation>
    <scope>GLYCOSYLATION</scope>
</reference>
<reference key="4">
    <citation type="journal article" date="2000" name="J. Cell Biol.">
        <title>Intracellular pH regulation by Na(+)/H(+) exchange requires phosphatidylinositol 4,5-bisphosphate.</title>
        <authorList>
            <person name="Aharonovitz O."/>
            <person name="Zaun H.C."/>
            <person name="Balla T."/>
            <person name="York J.D."/>
            <person name="Orlowski J."/>
            <person name="Grinstein S."/>
        </authorList>
    </citation>
    <scope>FUNCTION</scope>
    <scope>TRANSPORTER ACTIVITY</scope>
    <scope>PI(4,5)P2-BINDING</scope>
    <scope>ACTIVITY REGULATION</scope>
</reference>
<reference key="5">
    <citation type="journal article" date="2000" name="Mol. Cell">
        <title>Direct binding of the Na--H exchanger NHE1 to ERM proteins regulates the cortical cytoskeleton and cell shape independently of H(+) translocation.</title>
        <authorList>
            <person name="Denker S.P."/>
            <person name="Huang D.C."/>
            <person name="Orlowski J."/>
            <person name="Furthmayr H."/>
            <person name="Barber D.L."/>
        </authorList>
    </citation>
    <scope>FUNCTION</scope>
    <scope>TRANSPORTER ACTIVITY</scope>
    <scope>MUTAGENESIS OF GLU-266</scope>
    <scope>INTERACTION WITH EZR</scope>
</reference>
<reference key="6">
    <citation type="journal article" date="2003" name="Biol. Pharm. Bull.">
        <title>Calcineurin homologous protein isoform 2 (CHP2), Na+/H+ exchangers-binding protein, is expressed in intestinal epithelium.</title>
        <authorList>
            <person name="Inoue H."/>
            <person name="Nakamura Y."/>
            <person name="Nagita M."/>
            <person name="Takai T."/>
            <person name="Masuda M."/>
            <person name="Nakamura N."/>
            <person name="Kanazawa H."/>
        </authorList>
    </citation>
    <scope>INTERACTION WITH CHP1 AND CHP2</scope>
</reference>
<reference key="7">
    <citation type="journal article" date="2008" name="J. Biol. Chem.">
        <title>Calcineurin B homologous protein 3 promotes the biosynthetic maturation, cell surface stability, and optimal transport of the Na+/H+ exchanger NHE1 isoform.</title>
        <authorList>
            <person name="Zaun H.C."/>
            <person name="Shrier A."/>
            <person name="Orlowski J."/>
        </authorList>
    </citation>
    <scope>INTERACTION WITH TESC</scope>
    <scope>MUTAGENESIS OF 530-PHE--LEU-535</scope>
</reference>
<reference key="8">
    <citation type="journal article" date="2011" name="Am. J. Physiol.">
        <title>Dual functional significance of calcineurin homologous protein 1 binding to Na(+)/H(+) exchanger isoform 1.</title>
        <authorList>
            <person name="Matsushita M."/>
            <person name="Tanaka H."/>
            <person name="Mitsui K."/>
            <person name="Kanazawa H."/>
        </authorList>
    </citation>
    <scope>OLIGOMERIZATION</scope>
    <scope>GLYCOSYLATION</scope>
    <scope>UBIQUITINATION</scope>
    <scope>MUTAGENESIS OF 522-ILE--ILE-538</scope>
    <scope>SUBCELLULAR LOCATION</scope>
</reference>
<reference key="9">
    <citation type="journal article" date="2012" name="Nat. Commun.">
        <title>Quantitative maps of protein phosphorylation sites across 14 different rat organs and tissues.</title>
        <authorList>
            <person name="Lundby A."/>
            <person name="Secher A."/>
            <person name="Lage K."/>
            <person name="Nordsborg N.B."/>
            <person name="Dmytriyev A."/>
            <person name="Lundby C."/>
            <person name="Olsen J.V."/>
        </authorList>
    </citation>
    <scope>PHOSPHORYLATION [LARGE SCALE ANALYSIS] AT SER-603; SER-609; SER-697; SER-701; SER-707; SER-727; SER-730; SER-733; SER-790 AND SER-801</scope>
    <scope>IDENTIFICATION BY MASS SPECTROMETRY [LARGE SCALE ANALYSIS]</scope>
</reference>
<reference key="10">
    <citation type="journal article" date="2022" name="Life Sci.">
        <title>Sodium hydrogen exchanger (NHE1) palmitoylation and potential functional regulation.</title>
        <authorList>
            <person name="Hovde M.J."/>
            <person name="Bolland D.E."/>
            <person name="Armand A."/>
            <person name="Pitsch E."/>
            <person name="Bakker C."/>
            <person name="Kooiker A.J."/>
            <person name="Provost J.J."/>
            <person name="Vaughan R.A."/>
            <person name="Wallert M.A."/>
            <person name="Foster J.D."/>
        </authorList>
    </citation>
    <scope>PALMITOYLATION</scope>
    <scope>FUNCTION</scope>
</reference>
<keyword id="KW-0050">Antiport</keyword>
<keyword id="KW-0112">Calmodulin-binding</keyword>
<keyword id="KW-1003">Cell membrane</keyword>
<keyword id="KW-0325">Glycoprotein</keyword>
<keyword id="KW-0406">Ion transport</keyword>
<keyword id="KW-0449">Lipoprotein</keyword>
<keyword id="KW-0472">Membrane</keyword>
<keyword id="KW-0564">Palmitate</keyword>
<keyword id="KW-0597">Phosphoprotein</keyword>
<keyword id="KW-1185">Reference proteome</keyword>
<keyword id="KW-0915">Sodium</keyword>
<keyword id="KW-0739">Sodium transport</keyword>
<keyword id="KW-0812">Transmembrane</keyword>
<keyword id="KW-1133">Transmembrane helix</keyword>
<keyword id="KW-0813">Transport</keyword>
<keyword id="KW-0832">Ubl conjugation</keyword>
<dbReference type="EMBL" id="M85299">
    <property type="protein sequence ID" value="AAA98479.1"/>
    <property type="molecule type" value="mRNA"/>
</dbReference>
<dbReference type="PIR" id="A40204">
    <property type="entry name" value="A40204"/>
</dbReference>
<dbReference type="RefSeq" id="NP_036784.1">
    <property type="nucleotide sequence ID" value="NM_012652.2"/>
</dbReference>
<dbReference type="BMRB" id="P26431"/>
<dbReference type="SMR" id="P26431"/>
<dbReference type="BioGRID" id="246906">
    <property type="interactions" value="1"/>
</dbReference>
<dbReference type="FunCoup" id="P26431">
    <property type="interactions" value="453"/>
</dbReference>
<dbReference type="IntAct" id="P26431">
    <property type="interactions" value="3"/>
</dbReference>
<dbReference type="STRING" id="10116.ENSRNOP00000011049"/>
<dbReference type="BindingDB" id="P26431"/>
<dbReference type="ChEMBL" id="CHEMBL2577"/>
<dbReference type="DrugCentral" id="P26431"/>
<dbReference type="GuidetoPHARMACOLOGY" id="948"/>
<dbReference type="TCDB" id="2.A.36.1.1">
    <property type="family name" value="the monovalent cation:proton antiporter-1 (cpa1) family"/>
</dbReference>
<dbReference type="GlyCosmos" id="P26431">
    <property type="glycosylation" value="1 site, No reported glycans"/>
</dbReference>
<dbReference type="GlyGen" id="P26431">
    <property type="glycosylation" value="1 site"/>
</dbReference>
<dbReference type="iPTMnet" id="P26431"/>
<dbReference type="PhosphoSitePlus" id="P26431"/>
<dbReference type="SwissPalm" id="P26431"/>
<dbReference type="PaxDb" id="10116-ENSRNOP00000011049"/>
<dbReference type="Ensembl" id="ENSRNOT00000011049.5">
    <property type="protein sequence ID" value="ENSRNOP00000011049.2"/>
    <property type="gene ID" value="ENSRNOG00000007982.5"/>
</dbReference>
<dbReference type="GeneID" id="24782"/>
<dbReference type="KEGG" id="rno:24782"/>
<dbReference type="UCSC" id="RGD:3718">
    <property type="organism name" value="rat"/>
</dbReference>
<dbReference type="AGR" id="RGD:3718"/>
<dbReference type="CTD" id="6548"/>
<dbReference type="RGD" id="3718">
    <property type="gene designation" value="Slc9a1"/>
</dbReference>
<dbReference type="eggNOG" id="KOG1966">
    <property type="taxonomic scope" value="Eukaryota"/>
</dbReference>
<dbReference type="GeneTree" id="ENSGT00940000156338"/>
<dbReference type="HOGENOM" id="CLU_005912_4_1_1"/>
<dbReference type="InParanoid" id="P26431"/>
<dbReference type="OMA" id="TIMTYAV"/>
<dbReference type="OrthoDB" id="196264at2759"/>
<dbReference type="PhylomeDB" id="P26431"/>
<dbReference type="TreeFam" id="TF317212"/>
<dbReference type="Reactome" id="R-RNO-2160916">
    <property type="pathway name" value="Hyaluronan uptake and degradation"/>
</dbReference>
<dbReference type="Reactome" id="R-RNO-425986">
    <property type="pathway name" value="Sodium/Proton exchangers"/>
</dbReference>
<dbReference type="PRO" id="PR:P26431"/>
<dbReference type="Proteomes" id="UP000002494">
    <property type="component" value="Chromosome 5"/>
</dbReference>
<dbReference type="Bgee" id="ENSRNOG00000007982">
    <property type="expression patterns" value="Expressed in stomach and 20 other cell types or tissues"/>
</dbReference>
<dbReference type="GO" id="GO:0016324">
    <property type="term" value="C:apical plasma membrane"/>
    <property type="evidence" value="ECO:0000314"/>
    <property type="project" value="RGD"/>
</dbReference>
<dbReference type="GO" id="GO:0016323">
    <property type="term" value="C:basolateral plasma membrane"/>
    <property type="evidence" value="ECO:0000314"/>
    <property type="project" value="RGD"/>
</dbReference>
<dbReference type="GO" id="GO:0090533">
    <property type="term" value="C:cation-transporting ATPase complex"/>
    <property type="evidence" value="ECO:0000266"/>
    <property type="project" value="RGD"/>
</dbReference>
<dbReference type="GO" id="GO:0009986">
    <property type="term" value="C:cell surface"/>
    <property type="evidence" value="ECO:0000314"/>
    <property type="project" value="RGD"/>
</dbReference>
<dbReference type="GO" id="GO:0005737">
    <property type="term" value="C:cytoplasm"/>
    <property type="evidence" value="ECO:0000250"/>
    <property type="project" value="UniProtKB"/>
</dbReference>
<dbReference type="GO" id="GO:0014704">
    <property type="term" value="C:intercalated disc"/>
    <property type="evidence" value="ECO:0000314"/>
    <property type="project" value="RGD"/>
</dbReference>
<dbReference type="GO" id="GO:0016020">
    <property type="term" value="C:membrane"/>
    <property type="evidence" value="ECO:0000266"/>
    <property type="project" value="RGD"/>
</dbReference>
<dbReference type="GO" id="GO:0045121">
    <property type="term" value="C:membrane raft"/>
    <property type="evidence" value="ECO:0000266"/>
    <property type="project" value="RGD"/>
</dbReference>
<dbReference type="GO" id="GO:0005739">
    <property type="term" value="C:mitochondrion"/>
    <property type="evidence" value="ECO:0007669"/>
    <property type="project" value="GOC"/>
</dbReference>
<dbReference type="GO" id="GO:0005654">
    <property type="term" value="C:nucleoplasm"/>
    <property type="evidence" value="ECO:0007669"/>
    <property type="project" value="Ensembl"/>
</dbReference>
<dbReference type="GO" id="GO:0048471">
    <property type="term" value="C:perinuclear region of cytoplasm"/>
    <property type="evidence" value="ECO:0000314"/>
    <property type="project" value="RGD"/>
</dbReference>
<dbReference type="GO" id="GO:0005886">
    <property type="term" value="C:plasma membrane"/>
    <property type="evidence" value="ECO:0000314"/>
    <property type="project" value="UniProtKB"/>
</dbReference>
<dbReference type="GO" id="GO:0042383">
    <property type="term" value="C:sarcolemma"/>
    <property type="evidence" value="ECO:0000314"/>
    <property type="project" value="RGD"/>
</dbReference>
<dbReference type="GO" id="GO:0030315">
    <property type="term" value="C:T-tubule"/>
    <property type="evidence" value="ECO:0000314"/>
    <property type="project" value="RGD"/>
</dbReference>
<dbReference type="GO" id="GO:1990351">
    <property type="term" value="C:transporter complex"/>
    <property type="evidence" value="ECO:0000266"/>
    <property type="project" value="RGD"/>
</dbReference>
<dbReference type="GO" id="GO:0048306">
    <property type="term" value="F:calcium-dependent protein binding"/>
    <property type="evidence" value="ECO:0000250"/>
    <property type="project" value="UniProtKB"/>
</dbReference>
<dbReference type="GO" id="GO:0005516">
    <property type="term" value="F:calmodulin binding"/>
    <property type="evidence" value="ECO:0007669"/>
    <property type="project" value="UniProtKB-KW"/>
</dbReference>
<dbReference type="GO" id="GO:0042802">
    <property type="term" value="F:identical protein binding"/>
    <property type="evidence" value="ECO:0000266"/>
    <property type="project" value="RGD"/>
</dbReference>
<dbReference type="GO" id="GO:0005543">
    <property type="term" value="F:phospholipid binding"/>
    <property type="evidence" value="ECO:0000266"/>
    <property type="project" value="RGD"/>
</dbReference>
<dbReference type="GO" id="GO:0015386">
    <property type="term" value="F:potassium:proton antiporter activity"/>
    <property type="evidence" value="ECO:0000318"/>
    <property type="project" value="GO_Central"/>
</dbReference>
<dbReference type="GO" id="GO:0030346">
    <property type="term" value="F:protein phosphatase 2B binding"/>
    <property type="evidence" value="ECO:0000266"/>
    <property type="project" value="RGD"/>
</dbReference>
<dbReference type="GO" id="GO:0015385">
    <property type="term" value="F:sodium:proton antiporter activity"/>
    <property type="evidence" value="ECO:0000314"/>
    <property type="project" value="UniProtKB"/>
</dbReference>
<dbReference type="GO" id="GO:0086003">
    <property type="term" value="P:cardiac muscle cell contraction"/>
    <property type="evidence" value="ECO:0000270"/>
    <property type="project" value="RGD"/>
</dbReference>
<dbReference type="GO" id="GO:0055007">
    <property type="term" value="P:cardiac muscle cell differentiation"/>
    <property type="evidence" value="ECO:0000266"/>
    <property type="project" value="RGD"/>
</dbReference>
<dbReference type="GO" id="GO:0030154">
    <property type="term" value="P:cell differentiation"/>
    <property type="evidence" value="ECO:0000270"/>
    <property type="project" value="RGD"/>
</dbReference>
<dbReference type="GO" id="GO:0071468">
    <property type="term" value="P:cellular response to acidic pH"/>
    <property type="evidence" value="ECO:0000250"/>
    <property type="project" value="UniProtKB"/>
</dbReference>
<dbReference type="GO" id="GO:0071236">
    <property type="term" value="P:cellular response to antibiotic"/>
    <property type="evidence" value="ECO:0000270"/>
    <property type="project" value="RGD"/>
</dbReference>
<dbReference type="GO" id="GO:0070417">
    <property type="term" value="P:cellular response to cold"/>
    <property type="evidence" value="ECO:0000270"/>
    <property type="project" value="RGD"/>
</dbReference>
<dbReference type="GO" id="GO:0071257">
    <property type="term" value="P:cellular response to electrical stimulus"/>
    <property type="evidence" value="ECO:0000270"/>
    <property type="project" value="RGD"/>
</dbReference>
<dbReference type="GO" id="GO:0071872">
    <property type="term" value="P:cellular response to epinephrine stimulus"/>
    <property type="evidence" value="ECO:0000266"/>
    <property type="project" value="RGD"/>
</dbReference>
<dbReference type="GO" id="GO:0071456">
    <property type="term" value="P:cellular response to hypoxia"/>
    <property type="evidence" value="ECO:0000314"/>
    <property type="project" value="RGD"/>
</dbReference>
<dbReference type="GO" id="GO:0032869">
    <property type="term" value="P:cellular response to insulin stimulus"/>
    <property type="evidence" value="ECO:0000314"/>
    <property type="project" value="RGD"/>
</dbReference>
<dbReference type="GO" id="GO:0006883">
    <property type="term" value="P:intracellular sodium ion homeostasis"/>
    <property type="evidence" value="ECO:0000266"/>
    <property type="project" value="RGD"/>
</dbReference>
<dbReference type="GO" id="GO:0043066">
    <property type="term" value="P:negative regulation of apoptotic process"/>
    <property type="evidence" value="ECO:0000315"/>
    <property type="project" value="RGD"/>
</dbReference>
<dbReference type="GO" id="GO:0045760">
    <property type="term" value="P:positive regulation of action potential"/>
    <property type="evidence" value="ECO:0000315"/>
    <property type="project" value="RGD"/>
</dbReference>
<dbReference type="GO" id="GO:0043065">
    <property type="term" value="P:positive regulation of apoptotic process"/>
    <property type="evidence" value="ECO:0000315"/>
    <property type="project" value="RGD"/>
</dbReference>
<dbReference type="GO" id="GO:0070886">
    <property type="term" value="P:positive regulation of calcineurin-NFAT signaling cascade"/>
    <property type="evidence" value="ECO:0000266"/>
    <property type="project" value="RGD"/>
</dbReference>
<dbReference type="GO" id="GO:0010613">
    <property type="term" value="P:positive regulation of cardiac muscle hypertrophy"/>
    <property type="evidence" value="ECO:0000266"/>
    <property type="project" value="RGD"/>
</dbReference>
<dbReference type="GO" id="GO:0030307">
    <property type="term" value="P:positive regulation of cell growth"/>
    <property type="evidence" value="ECO:0000315"/>
    <property type="project" value="RGD"/>
</dbReference>
<dbReference type="GO" id="GO:1902533">
    <property type="term" value="P:positive regulation of intracellular signal transduction"/>
    <property type="evidence" value="ECO:0000315"/>
    <property type="project" value="RGD"/>
</dbReference>
<dbReference type="GO" id="GO:0035794">
    <property type="term" value="P:positive regulation of mitochondrial membrane permeability"/>
    <property type="evidence" value="ECO:0000315"/>
    <property type="project" value="RGD"/>
</dbReference>
<dbReference type="GO" id="GO:0098735">
    <property type="term" value="P:positive regulation of the force of heart contraction"/>
    <property type="evidence" value="ECO:0000266"/>
    <property type="project" value="RGD"/>
</dbReference>
<dbReference type="GO" id="GO:0045944">
    <property type="term" value="P:positive regulation of transcription by RNA polymerase II"/>
    <property type="evidence" value="ECO:0000266"/>
    <property type="project" value="RGD"/>
</dbReference>
<dbReference type="GO" id="GO:0071805">
    <property type="term" value="P:potassium ion transmembrane transport"/>
    <property type="evidence" value="ECO:0000318"/>
    <property type="project" value="GO_Central"/>
</dbReference>
<dbReference type="GO" id="GO:1902600">
    <property type="term" value="P:proton transmembrane transport"/>
    <property type="evidence" value="ECO:0000266"/>
    <property type="project" value="RGD"/>
</dbReference>
<dbReference type="GO" id="GO:0010882">
    <property type="term" value="P:regulation of cardiac muscle contraction by calcium ion signaling"/>
    <property type="evidence" value="ECO:0000266"/>
    <property type="project" value="RGD"/>
</dbReference>
<dbReference type="GO" id="GO:0051453">
    <property type="term" value="P:regulation of intracellular pH"/>
    <property type="evidence" value="ECO:0000315"/>
    <property type="project" value="RGD"/>
</dbReference>
<dbReference type="GO" id="GO:0006885">
    <property type="term" value="P:regulation of pH"/>
    <property type="evidence" value="ECO:0000250"/>
    <property type="project" value="UniProtKB"/>
</dbReference>
<dbReference type="GO" id="GO:0002026">
    <property type="term" value="P:regulation of the force of heart contraction"/>
    <property type="evidence" value="ECO:0000315"/>
    <property type="project" value="RGD"/>
</dbReference>
<dbReference type="GO" id="GO:0086092">
    <property type="term" value="P:regulation of the force of heart contraction by cardiac conduction"/>
    <property type="evidence" value="ECO:0000266"/>
    <property type="project" value="RGD"/>
</dbReference>
<dbReference type="GO" id="GO:0010447">
    <property type="term" value="P:response to acidic pH"/>
    <property type="evidence" value="ECO:0000314"/>
    <property type="project" value="UniProtKB"/>
</dbReference>
<dbReference type="GO" id="GO:0035994">
    <property type="term" value="P:response to muscle stretch"/>
    <property type="evidence" value="ECO:0000266"/>
    <property type="project" value="RGD"/>
</dbReference>
<dbReference type="GO" id="GO:0036376">
    <property type="term" value="P:sodium ion export across plasma membrane"/>
    <property type="evidence" value="ECO:0000250"/>
    <property type="project" value="UniProtKB"/>
</dbReference>
<dbReference type="GO" id="GO:0098719">
    <property type="term" value="P:sodium ion import across plasma membrane"/>
    <property type="evidence" value="ECO:0000266"/>
    <property type="project" value="RGD"/>
</dbReference>
<dbReference type="GO" id="GO:0006814">
    <property type="term" value="P:sodium ion transport"/>
    <property type="evidence" value="ECO:0000266"/>
    <property type="project" value="RGD"/>
</dbReference>
<dbReference type="GO" id="GO:0048863">
    <property type="term" value="P:stem cell differentiation"/>
    <property type="evidence" value="ECO:0000266"/>
    <property type="project" value="RGD"/>
</dbReference>
<dbReference type="Gene3D" id="6.10.140.1330">
    <property type="match status" value="1"/>
</dbReference>
<dbReference type="Gene3D" id="6.10.250.1040">
    <property type="match status" value="1"/>
</dbReference>
<dbReference type="Gene3D" id="6.10.250.2020">
    <property type="match status" value="1"/>
</dbReference>
<dbReference type="InterPro" id="IPR018422">
    <property type="entry name" value="Cation/H_exchanger_CPA1"/>
</dbReference>
<dbReference type="InterPro" id="IPR006153">
    <property type="entry name" value="Cation/H_exchanger_TM"/>
</dbReference>
<dbReference type="InterPro" id="IPR004709">
    <property type="entry name" value="NaH_exchanger"/>
</dbReference>
<dbReference type="InterPro" id="IPR001970">
    <property type="entry name" value="NHE-1-like"/>
</dbReference>
<dbReference type="InterPro" id="IPR032103">
    <property type="entry name" value="NHE_CaM-bd"/>
</dbReference>
<dbReference type="NCBIfam" id="TIGR00840">
    <property type="entry name" value="b_cpa1"/>
    <property type="match status" value="1"/>
</dbReference>
<dbReference type="PANTHER" id="PTHR10110">
    <property type="entry name" value="SODIUM/HYDROGEN EXCHANGER"/>
    <property type="match status" value="1"/>
</dbReference>
<dbReference type="PANTHER" id="PTHR10110:SF59">
    <property type="entry name" value="SODIUM_HYDROGEN EXCHANGER 1"/>
    <property type="match status" value="1"/>
</dbReference>
<dbReference type="Pfam" id="PF00999">
    <property type="entry name" value="Na_H_Exchanger"/>
    <property type="match status" value="1"/>
</dbReference>
<dbReference type="Pfam" id="PF16644">
    <property type="entry name" value="NEXCaM_BD"/>
    <property type="match status" value="1"/>
</dbReference>
<dbReference type="PRINTS" id="PR01084">
    <property type="entry name" value="NAHEXCHNGR"/>
</dbReference>
<dbReference type="PRINTS" id="PR01085">
    <property type="entry name" value="NAHEXCHNGR1"/>
</dbReference>